<protein>
    <recommendedName>
        <fullName>Protein trichome birefringence-like 36</fullName>
    </recommendedName>
</protein>
<keyword id="KW-0472">Membrane</keyword>
<keyword id="KW-1185">Reference proteome</keyword>
<keyword id="KW-0735">Signal-anchor</keyword>
<keyword id="KW-0812">Transmembrane</keyword>
<keyword id="KW-1133">Transmembrane helix</keyword>
<organism>
    <name type="scientific">Arabidopsis thaliana</name>
    <name type="common">Mouse-ear cress</name>
    <dbReference type="NCBI Taxonomy" id="3702"/>
    <lineage>
        <taxon>Eukaryota</taxon>
        <taxon>Viridiplantae</taxon>
        <taxon>Streptophyta</taxon>
        <taxon>Embryophyta</taxon>
        <taxon>Tracheophyta</taxon>
        <taxon>Spermatophyta</taxon>
        <taxon>Magnoliopsida</taxon>
        <taxon>eudicotyledons</taxon>
        <taxon>Gunneridae</taxon>
        <taxon>Pentapetalae</taxon>
        <taxon>rosids</taxon>
        <taxon>malvids</taxon>
        <taxon>Brassicales</taxon>
        <taxon>Brassicaceae</taxon>
        <taxon>Camelineae</taxon>
        <taxon>Arabidopsis</taxon>
    </lineage>
</organism>
<accession>Q940H3</accession>
<accession>Q9M380</accession>
<reference key="1">
    <citation type="journal article" date="2000" name="Nature">
        <title>Sequence and analysis of chromosome 3 of the plant Arabidopsis thaliana.</title>
        <authorList>
            <person name="Salanoubat M."/>
            <person name="Lemcke K."/>
            <person name="Rieger M."/>
            <person name="Ansorge W."/>
            <person name="Unseld M."/>
            <person name="Fartmann B."/>
            <person name="Valle G."/>
            <person name="Bloecker H."/>
            <person name="Perez-Alonso M."/>
            <person name="Obermaier B."/>
            <person name="Delseny M."/>
            <person name="Boutry M."/>
            <person name="Grivell L.A."/>
            <person name="Mache R."/>
            <person name="Puigdomenech P."/>
            <person name="De Simone V."/>
            <person name="Choisne N."/>
            <person name="Artiguenave F."/>
            <person name="Robert C."/>
            <person name="Brottier P."/>
            <person name="Wincker P."/>
            <person name="Cattolico L."/>
            <person name="Weissenbach J."/>
            <person name="Saurin W."/>
            <person name="Quetier F."/>
            <person name="Schaefer M."/>
            <person name="Mueller-Auer S."/>
            <person name="Gabel C."/>
            <person name="Fuchs M."/>
            <person name="Benes V."/>
            <person name="Wurmbach E."/>
            <person name="Drzonek H."/>
            <person name="Erfle H."/>
            <person name="Jordan N."/>
            <person name="Bangert S."/>
            <person name="Wiedelmann R."/>
            <person name="Kranz H."/>
            <person name="Voss H."/>
            <person name="Holland R."/>
            <person name="Brandt P."/>
            <person name="Nyakatura G."/>
            <person name="Vezzi A."/>
            <person name="D'Angelo M."/>
            <person name="Pallavicini A."/>
            <person name="Toppo S."/>
            <person name="Simionati B."/>
            <person name="Conrad A."/>
            <person name="Hornischer K."/>
            <person name="Kauer G."/>
            <person name="Loehnert T.-H."/>
            <person name="Nordsiek G."/>
            <person name="Reichelt J."/>
            <person name="Scharfe M."/>
            <person name="Schoen O."/>
            <person name="Bargues M."/>
            <person name="Terol J."/>
            <person name="Climent J."/>
            <person name="Navarro P."/>
            <person name="Collado C."/>
            <person name="Perez-Perez A."/>
            <person name="Ottenwaelder B."/>
            <person name="Duchemin D."/>
            <person name="Cooke R."/>
            <person name="Laudie M."/>
            <person name="Berger-Llauro C."/>
            <person name="Purnelle B."/>
            <person name="Masuy D."/>
            <person name="de Haan M."/>
            <person name="Maarse A.C."/>
            <person name="Alcaraz J.-P."/>
            <person name="Cottet A."/>
            <person name="Casacuberta E."/>
            <person name="Monfort A."/>
            <person name="Argiriou A."/>
            <person name="Flores M."/>
            <person name="Liguori R."/>
            <person name="Vitale D."/>
            <person name="Mannhaupt G."/>
            <person name="Haase D."/>
            <person name="Schoof H."/>
            <person name="Rudd S."/>
            <person name="Zaccaria P."/>
            <person name="Mewes H.-W."/>
            <person name="Mayer K.F.X."/>
            <person name="Kaul S."/>
            <person name="Town C.D."/>
            <person name="Koo H.L."/>
            <person name="Tallon L.J."/>
            <person name="Jenkins J."/>
            <person name="Rooney T."/>
            <person name="Rizzo M."/>
            <person name="Walts A."/>
            <person name="Utterback T."/>
            <person name="Fujii C.Y."/>
            <person name="Shea T.P."/>
            <person name="Creasy T.H."/>
            <person name="Haas B."/>
            <person name="Maiti R."/>
            <person name="Wu D."/>
            <person name="Peterson J."/>
            <person name="Van Aken S."/>
            <person name="Pai G."/>
            <person name="Militscher J."/>
            <person name="Sellers P."/>
            <person name="Gill J.E."/>
            <person name="Feldblyum T.V."/>
            <person name="Preuss D."/>
            <person name="Lin X."/>
            <person name="Nierman W.C."/>
            <person name="Salzberg S.L."/>
            <person name="White O."/>
            <person name="Venter J.C."/>
            <person name="Fraser C.M."/>
            <person name="Kaneko T."/>
            <person name="Nakamura Y."/>
            <person name="Sato S."/>
            <person name="Kato T."/>
            <person name="Asamizu E."/>
            <person name="Sasamoto S."/>
            <person name="Kimura T."/>
            <person name="Idesawa K."/>
            <person name="Kawashima K."/>
            <person name="Kishida Y."/>
            <person name="Kiyokawa C."/>
            <person name="Kohara M."/>
            <person name="Matsumoto M."/>
            <person name="Matsuno A."/>
            <person name="Muraki A."/>
            <person name="Nakayama S."/>
            <person name="Nakazaki N."/>
            <person name="Shinpo S."/>
            <person name="Takeuchi C."/>
            <person name="Wada T."/>
            <person name="Watanabe A."/>
            <person name="Yamada M."/>
            <person name="Yasuda M."/>
            <person name="Tabata S."/>
        </authorList>
    </citation>
    <scope>NUCLEOTIDE SEQUENCE [LARGE SCALE GENOMIC DNA]</scope>
    <source>
        <strain>cv. Columbia</strain>
    </source>
</reference>
<reference key="2">
    <citation type="journal article" date="2017" name="Plant J.">
        <title>Araport11: a complete reannotation of the Arabidopsis thaliana reference genome.</title>
        <authorList>
            <person name="Cheng C.Y."/>
            <person name="Krishnakumar V."/>
            <person name="Chan A.P."/>
            <person name="Thibaud-Nissen F."/>
            <person name="Schobel S."/>
            <person name="Town C.D."/>
        </authorList>
    </citation>
    <scope>GENOME REANNOTATION</scope>
    <source>
        <strain>cv. Columbia</strain>
    </source>
</reference>
<reference key="3">
    <citation type="journal article" date="2003" name="Science">
        <title>Empirical analysis of transcriptional activity in the Arabidopsis genome.</title>
        <authorList>
            <person name="Yamada K."/>
            <person name="Lim J."/>
            <person name="Dale J.M."/>
            <person name="Chen H."/>
            <person name="Shinn P."/>
            <person name="Palm C.J."/>
            <person name="Southwick A.M."/>
            <person name="Wu H.C."/>
            <person name="Kim C.J."/>
            <person name="Nguyen M."/>
            <person name="Pham P.K."/>
            <person name="Cheuk R.F."/>
            <person name="Karlin-Newmann G."/>
            <person name="Liu S.X."/>
            <person name="Lam B."/>
            <person name="Sakano H."/>
            <person name="Wu T."/>
            <person name="Yu G."/>
            <person name="Miranda M."/>
            <person name="Quach H.L."/>
            <person name="Tripp M."/>
            <person name="Chang C.H."/>
            <person name="Lee J.M."/>
            <person name="Toriumi M.J."/>
            <person name="Chan M.M."/>
            <person name="Tang C.C."/>
            <person name="Onodera C.S."/>
            <person name="Deng J.M."/>
            <person name="Akiyama K."/>
            <person name="Ansari Y."/>
            <person name="Arakawa T."/>
            <person name="Banh J."/>
            <person name="Banno F."/>
            <person name="Bowser L."/>
            <person name="Brooks S.Y."/>
            <person name="Carninci P."/>
            <person name="Chao Q."/>
            <person name="Choy N."/>
            <person name="Enju A."/>
            <person name="Goldsmith A.D."/>
            <person name="Gurjal M."/>
            <person name="Hansen N.F."/>
            <person name="Hayashizaki Y."/>
            <person name="Johnson-Hopson C."/>
            <person name="Hsuan V.W."/>
            <person name="Iida K."/>
            <person name="Karnes M."/>
            <person name="Khan S."/>
            <person name="Koesema E."/>
            <person name="Ishida J."/>
            <person name="Jiang P.X."/>
            <person name="Jones T."/>
            <person name="Kawai J."/>
            <person name="Kamiya A."/>
            <person name="Meyers C."/>
            <person name="Nakajima M."/>
            <person name="Narusaka M."/>
            <person name="Seki M."/>
            <person name="Sakurai T."/>
            <person name="Satou M."/>
            <person name="Tamse R."/>
            <person name="Vaysberg M."/>
            <person name="Wallender E.K."/>
            <person name="Wong C."/>
            <person name="Yamamura Y."/>
            <person name="Yuan S."/>
            <person name="Shinozaki K."/>
            <person name="Davis R.W."/>
            <person name="Theologis A."/>
            <person name="Ecker J.R."/>
        </authorList>
    </citation>
    <scope>NUCLEOTIDE SEQUENCE [LARGE SCALE MRNA]</scope>
    <source>
        <strain>cv. Columbia</strain>
    </source>
</reference>
<reference key="4">
    <citation type="journal article" date="2007" name="Plant J.">
        <title>Arabidopsis ESK1 encodes a novel regulator of freezing tolerance.</title>
        <authorList>
            <person name="Xin Z."/>
            <person name="Mandaokar A."/>
            <person name="Chen J."/>
            <person name="Last R.L."/>
            <person name="Browse J."/>
        </authorList>
    </citation>
    <scope>GENE FAMILY</scope>
    <source>
        <strain>cv. Columbia</strain>
    </source>
</reference>
<reference key="5">
    <citation type="journal article" date="2010" name="Plant Physiol.">
        <title>TRICHOME BIREFRINGENCE and its homolog AT5G01360 encode plant-specific DUF231 proteins required for cellulose biosynthesis in Arabidopsis.</title>
        <authorList>
            <person name="Bischoff V."/>
            <person name="Nita S."/>
            <person name="Neumetzler L."/>
            <person name="Schindelasch D."/>
            <person name="Urbain A."/>
            <person name="Eshed R."/>
            <person name="Persson S."/>
            <person name="Delmer D."/>
            <person name="Scheible W.R."/>
        </authorList>
    </citation>
    <scope>GENE FAMILY</scope>
    <scope>NOMENCLATURE</scope>
</reference>
<reference key="6">
    <citation type="journal article" date="2010" name="Plant Signal. Behav.">
        <title>Involvement of TBL/DUF231 proteins into cell wall biology.</title>
        <authorList>
            <person name="Bischoff V."/>
            <person name="Selbig J."/>
            <person name="Scheible W.R."/>
        </authorList>
    </citation>
    <scope>3D-STRUCTURE MODELING</scope>
</reference>
<evidence type="ECO:0000250" key="1">
    <source>
        <dbReference type="UniProtKB" id="Q9FG35"/>
    </source>
</evidence>
<evidence type="ECO:0000250" key="2">
    <source>
        <dbReference type="UniProtKB" id="Q9LY46"/>
    </source>
</evidence>
<evidence type="ECO:0000255" key="3"/>
<evidence type="ECO:0000305" key="4"/>
<evidence type="ECO:0000305" key="5">
    <source>
    </source>
</evidence>
<name>TBL36_ARATH</name>
<proteinExistence type="evidence at transcript level"/>
<comment type="function">
    <text evidence="1 2">May act as a bridging protein that binds pectin and other cell wall polysaccharides. Probably involved in maintaining esterification of pectins (By similarity). May be involved in the specific O-acetylation of cell wall polymers (By similarity).</text>
</comment>
<comment type="subcellular location">
    <subcellularLocation>
        <location evidence="4">Membrane</location>
        <topology evidence="4">Single-pass type II membrane protein</topology>
    </subcellularLocation>
</comment>
<comment type="miscellaneous">
    <text evidence="5">Contains 2 motifs that are conserved in esterases, but it is unlikely that this protein belongs to the catalytically active pectin esterases.</text>
</comment>
<comment type="similarity">
    <text evidence="4">Belongs to the PC-esterase family. TBL subfamily.</text>
</comment>
<comment type="sequence caution" evidence="4">
    <conflict type="erroneous gene model prediction">
        <sequence resource="EMBL-CDS" id="CAB71000"/>
    </conflict>
</comment>
<gene>
    <name type="primary">TBL36</name>
    <name type="ordered locus">At3g54260</name>
    <name type="ORF">F24B22.220</name>
</gene>
<sequence length="379" mass="44371">MATSETRVLFLSLCLILGKVVLSQFDELWLVGDDDPLNALQTRRERREERCDYSVGKWTFDETYPLYDSSCPYLSSALSCQRNGRPDSYYQKWRWIPKACSLPRFDALKFLGKMRGKRIMLVGDSMMRNQWESLVCLVQSVLPTHRKKLTYNGPTMSFHSLDFETSIEFCWAPLLVELKRGVDRKRVLHLDSIEDNARYWRGVDVLVFDSAHWWTHSQRWSSWDYYMDGNKIFKAMDPMVAYERGLTTWAKWVEINLDPSKTKVIFRTVSPRESGQMCYNQKHPLPSLSSSTKPHVPQQSRVLNKVLRTMKYRVYLYDITTMSAYRRDGHPSVFKRAMHEEEKHHRIAGPSSDCSHWCLPGVPDIWNEMLSSIILTNAV</sequence>
<feature type="chain" id="PRO_0000425401" description="Protein trichome birefringence-like 36">
    <location>
        <begin position="1"/>
        <end position="379"/>
    </location>
</feature>
<feature type="transmembrane region" description="Helical; Signal-anchor for type II membrane protein" evidence="3">
    <location>
        <begin position="8"/>
        <end position="24"/>
    </location>
</feature>
<feature type="short sequence motif" description="GDS motif">
    <location>
        <begin position="123"/>
        <end position="125"/>
    </location>
</feature>
<feature type="short sequence motif" description="DCXHWCLPGXXDXWN motif">
    <location>
        <begin position="353"/>
        <end position="367"/>
    </location>
</feature>
<dbReference type="EMBL" id="AL132957">
    <property type="protein sequence ID" value="CAB71000.1"/>
    <property type="status" value="ALT_SEQ"/>
    <property type="molecule type" value="Genomic_DNA"/>
</dbReference>
<dbReference type="EMBL" id="CP002686">
    <property type="protein sequence ID" value="AEE79205.1"/>
    <property type="molecule type" value="Genomic_DNA"/>
</dbReference>
<dbReference type="EMBL" id="AY054634">
    <property type="protein sequence ID" value="AAK96825.1"/>
    <property type="molecule type" value="mRNA"/>
</dbReference>
<dbReference type="EMBL" id="AY081518">
    <property type="protein sequence ID" value="AAM10080.1"/>
    <property type="molecule type" value="mRNA"/>
</dbReference>
<dbReference type="PIR" id="T47585">
    <property type="entry name" value="T47585"/>
</dbReference>
<dbReference type="RefSeq" id="NP_566996.1">
    <property type="nucleotide sequence ID" value="NM_115286.3"/>
</dbReference>
<dbReference type="SMR" id="Q940H3"/>
<dbReference type="BioGRID" id="9910">
    <property type="interactions" value="11"/>
</dbReference>
<dbReference type="FunCoup" id="Q940H3">
    <property type="interactions" value="26"/>
</dbReference>
<dbReference type="IntAct" id="Q940H3">
    <property type="interactions" value="11"/>
</dbReference>
<dbReference type="STRING" id="3702.Q940H3"/>
<dbReference type="PaxDb" id="3702-AT3G54260.1"/>
<dbReference type="ProteomicsDB" id="232994"/>
<dbReference type="EnsemblPlants" id="AT3G54260.1">
    <property type="protein sequence ID" value="AT3G54260.1"/>
    <property type="gene ID" value="AT3G54260"/>
</dbReference>
<dbReference type="GeneID" id="824593"/>
<dbReference type="Gramene" id="AT3G54260.1">
    <property type="protein sequence ID" value="AT3G54260.1"/>
    <property type="gene ID" value="AT3G54260"/>
</dbReference>
<dbReference type="KEGG" id="ath:AT3G54260"/>
<dbReference type="Araport" id="AT3G54260"/>
<dbReference type="TAIR" id="AT3G54260">
    <property type="gene designation" value="TBL36"/>
</dbReference>
<dbReference type="eggNOG" id="ENOG502QT46">
    <property type="taxonomic scope" value="Eukaryota"/>
</dbReference>
<dbReference type="HOGENOM" id="CLU_020953_3_1_1"/>
<dbReference type="InParanoid" id="Q940H3"/>
<dbReference type="OMA" id="HWWTHSE"/>
<dbReference type="PhylomeDB" id="Q940H3"/>
<dbReference type="PRO" id="PR:Q940H3"/>
<dbReference type="Proteomes" id="UP000006548">
    <property type="component" value="Chromosome 3"/>
</dbReference>
<dbReference type="ExpressionAtlas" id="Q940H3">
    <property type="expression patterns" value="baseline and differential"/>
</dbReference>
<dbReference type="GO" id="GO:0016020">
    <property type="term" value="C:membrane"/>
    <property type="evidence" value="ECO:0007669"/>
    <property type="project" value="UniProtKB-SubCell"/>
</dbReference>
<dbReference type="GO" id="GO:0016413">
    <property type="term" value="F:O-acetyltransferase activity"/>
    <property type="evidence" value="ECO:0007669"/>
    <property type="project" value="InterPro"/>
</dbReference>
<dbReference type="InterPro" id="IPR029962">
    <property type="entry name" value="TBL"/>
</dbReference>
<dbReference type="InterPro" id="IPR026057">
    <property type="entry name" value="TBL_C"/>
</dbReference>
<dbReference type="InterPro" id="IPR025846">
    <property type="entry name" value="TBL_N"/>
</dbReference>
<dbReference type="PANTHER" id="PTHR32285:SF155">
    <property type="entry name" value="PROTEIN TRICHOME BIREFRINGENCE-LIKE 36"/>
    <property type="match status" value="1"/>
</dbReference>
<dbReference type="PANTHER" id="PTHR32285">
    <property type="entry name" value="PROTEIN TRICHOME BIREFRINGENCE-LIKE 9-RELATED"/>
    <property type="match status" value="1"/>
</dbReference>
<dbReference type="Pfam" id="PF13839">
    <property type="entry name" value="PC-Esterase"/>
    <property type="match status" value="1"/>
</dbReference>
<dbReference type="Pfam" id="PF14416">
    <property type="entry name" value="PMR5N"/>
    <property type="match status" value="1"/>
</dbReference>